<comment type="function">
    <text evidence="1">This is one of the proteins that bind and probably mediate the attachment of the 5S RNA into the large ribosomal subunit, where it forms part of the central protuberance. In the 70S ribosome it contacts protein S13 of the 30S subunit (bridge B1b), connecting the 2 subunits; this bridge is implicated in subunit movement. May contact the P site tRNA; the 5S rRNA and some of its associated proteins might help stabilize positioning of ribosome-bound tRNAs.</text>
</comment>
<comment type="subunit">
    <text evidence="1">Part of the 50S ribosomal subunit; contacts the 5S rRNA and probably tRNA. Forms a bridge to the 30S subunit in the 70S ribosome.</text>
</comment>
<comment type="similarity">
    <text evidence="1">Belongs to the universal ribosomal protein uL5 family.</text>
</comment>
<organism>
    <name type="scientific">Methanococcus vannielii</name>
    <dbReference type="NCBI Taxonomy" id="2187"/>
    <lineage>
        <taxon>Archaea</taxon>
        <taxon>Methanobacteriati</taxon>
        <taxon>Methanobacteriota</taxon>
        <taxon>Methanomada group</taxon>
        <taxon>Methanococci</taxon>
        <taxon>Methanococcales</taxon>
        <taxon>Methanococcaceae</taxon>
        <taxon>Methanococcus</taxon>
    </lineage>
</organism>
<reference key="1">
    <citation type="journal article" date="1989" name="J. Mol. Biol.">
        <title>Organization and structure of the Methanococcus transcriptional unit homologous to the Escherichia coli 'spectinomycin operon'. Implications for the evolutionary relationship of 70 S and 80 S ribosomes.</title>
        <authorList>
            <person name="Auer J."/>
            <person name="Spicker G."/>
            <person name="Boeck A."/>
        </authorList>
    </citation>
    <scope>NUCLEOTIDE SEQUENCE [GENOMIC DNA]</scope>
</reference>
<gene>
    <name evidence="1" type="primary">rpl5</name>
</gene>
<name>RL5_METVA</name>
<evidence type="ECO:0000255" key="1">
    <source>
        <dbReference type="HAMAP-Rule" id="MF_01333"/>
    </source>
</evidence>
<evidence type="ECO:0000305" key="2"/>
<proteinExistence type="inferred from homology"/>
<accession>P14029</accession>
<feature type="chain" id="PRO_0000125060" description="Large ribosomal subunit protein uL5">
    <location>
        <begin position="1"/>
        <end position="181"/>
    </location>
</feature>
<protein>
    <recommendedName>
        <fullName evidence="1">Large ribosomal subunit protein uL5</fullName>
    </recommendedName>
    <alternativeName>
        <fullName evidence="2">50S ribosomal protein L5</fullName>
    </alternativeName>
</protein>
<sequence length="181" mass="20293">MSFQEVWEKEPMKKPRIQKVTVNFGVGEAGDRLTIGAKVIETLTGQAPVRTLAKQTNPAFGIRKKLPIGLKVTLRGKNAEEFLENAFVAFKVSGKVLYASSFDKVGNFSFGVPEHIDFPGQKYDPTVGIYGMDICVTFEKPGYRVKSRKLKRSHIPAKHLVKKEEAIEYIEKKFGAEVVME</sequence>
<dbReference type="EMBL" id="X16720">
    <property type="protein sequence ID" value="CAA34693.1"/>
    <property type="molecule type" value="Genomic_DNA"/>
</dbReference>
<dbReference type="PIR" id="S05617">
    <property type="entry name" value="R5MX5"/>
</dbReference>
<dbReference type="SMR" id="P14029"/>
<dbReference type="OMA" id="PIGCAVT"/>
<dbReference type="GO" id="GO:1990904">
    <property type="term" value="C:ribonucleoprotein complex"/>
    <property type="evidence" value="ECO:0007669"/>
    <property type="project" value="UniProtKB-KW"/>
</dbReference>
<dbReference type="GO" id="GO:0005840">
    <property type="term" value="C:ribosome"/>
    <property type="evidence" value="ECO:0007669"/>
    <property type="project" value="UniProtKB-KW"/>
</dbReference>
<dbReference type="GO" id="GO:0019843">
    <property type="term" value="F:rRNA binding"/>
    <property type="evidence" value="ECO:0007669"/>
    <property type="project" value="UniProtKB-UniRule"/>
</dbReference>
<dbReference type="GO" id="GO:0003735">
    <property type="term" value="F:structural constituent of ribosome"/>
    <property type="evidence" value="ECO:0007669"/>
    <property type="project" value="InterPro"/>
</dbReference>
<dbReference type="GO" id="GO:0000049">
    <property type="term" value="F:tRNA binding"/>
    <property type="evidence" value="ECO:0007669"/>
    <property type="project" value="UniProtKB-UniRule"/>
</dbReference>
<dbReference type="GO" id="GO:0006412">
    <property type="term" value="P:translation"/>
    <property type="evidence" value="ECO:0007669"/>
    <property type="project" value="UniProtKB-UniRule"/>
</dbReference>
<dbReference type="FunFam" id="3.30.1440.10:FF:000002">
    <property type="entry name" value="60S ribosomal protein L11"/>
    <property type="match status" value="1"/>
</dbReference>
<dbReference type="Gene3D" id="3.30.1440.10">
    <property type="match status" value="1"/>
</dbReference>
<dbReference type="HAMAP" id="MF_01333_A">
    <property type="entry name" value="Ribosomal_uL5_A"/>
    <property type="match status" value="1"/>
</dbReference>
<dbReference type="InterPro" id="IPR002132">
    <property type="entry name" value="Ribosomal_uL5"/>
</dbReference>
<dbReference type="InterPro" id="IPR022804">
    <property type="entry name" value="Ribosomal_uL5_arc"/>
</dbReference>
<dbReference type="InterPro" id="IPR031309">
    <property type="entry name" value="Ribosomal_uL5_C"/>
</dbReference>
<dbReference type="InterPro" id="IPR020929">
    <property type="entry name" value="Ribosomal_uL5_CS"/>
</dbReference>
<dbReference type="InterPro" id="IPR022803">
    <property type="entry name" value="Ribosomal_uL5_dom_sf"/>
</dbReference>
<dbReference type="InterPro" id="IPR031310">
    <property type="entry name" value="Ribosomal_uL5_N"/>
</dbReference>
<dbReference type="NCBIfam" id="NF003258">
    <property type="entry name" value="PRK04219.1"/>
    <property type="match status" value="1"/>
</dbReference>
<dbReference type="PANTHER" id="PTHR11994">
    <property type="entry name" value="60S RIBOSOMAL PROTEIN L11-RELATED"/>
    <property type="match status" value="1"/>
</dbReference>
<dbReference type="Pfam" id="PF00281">
    <property type="entry name" value="Ribosomal_L5"/>
    <property type="match status" value="1"/>
</dbReference>
<dbReference type="Pfam" id="PF00673">
    <property type="entry name" value="Ribosomal_L5_C"/>
    <property type="match status" value="1"/>
</dbReference>
<dbReference type="PIRSF" id="PIRSF002161">
    <property type="entry name" value="Ribosomal_L5"/>
    <property type="match status" value="1"/>
</dbReference>
<dbReference type="SUPFAM" id="SSF55282">
    <property type="entry name" value="RL5-like"/>
    <property type="match status" value="1"/>
</dbReference>
<dbReference type="PROSITE" id="PS00358">
    <property type="entry name" value="RIBOSOMAL_L5"/>
    <property type="match status" value="1"/>
</dbReference>
<keyword id="KW-0687">Ribonucleoprotein</keyword>
<keyword id="KW-0689">Ribosomal protein</keyword>
<keyword id="KW-0694">RNA-binding</keyword>
<keyword id="KW-0699">rRNA-binding</keyword>
<keyword id="KW-0820">tRNA-binding</keyword>